<evidence type="ECO:0000250" key="1"/>
<evidence type="ECO:0000255" key="2"/>
<evidence type="ECO:0000305" key="3"/>
<organism>
    <name type="scientific">Gallus gallus</name>
    <name type="common">Chicken</name>
    <dbReference type="NCBI Taxonomy" id="9031"/>
    <lineage>
        <taxon>Eukaryota</taxon>
        <taxon>Metazoa</taxon>
        <taxon>Chordata</taxon>
        <taxon>Craniata</taxon>
        <taxon>Vertebrata</taxon>
        <taxon>Euteleostomi</taxon>
        <taxon>Archelosauria</taxon>
        <taxon>Archosauria</taxon>
        <taxon>Dinosauria</taxon>
        <taxon>Saurischia</taxon>
        <taxon>Theropoda</taxon>
        <taxon>Coelurosauria</taxon>
        <taxon>Aves</taxon>
        <taxon>Neognathae</taxon>
        <taxon>Galloanserae</taxon>
        <taxon>Galliformes</taxon>
        <taxon>Phasianidae</taxon>
        <taxon>Phasianinae</taxon>
        <taxon>Gallus</taxon>
    </lineage>
</organism>
<proteinExistence type="evidence at transcript level"/>
<dbReference type="EMBL" id="AJ720299">
    <property type="protein sequence ID" value="CAG31958.1"/>
    <property type="molecule type" value="mRNA"/>
</dbReference>
<dbReference type="EMBL" id="AJ851554">
    <property type="protein sequence ID" value="CAH65188.1"/>
    <property type="molecule type" value="mRNA"/>
</dbReference>
<dbReference type="SMR" id="Q5ZJY5"/>
<dbReference type="BioGRID" id="688950">
    <property type="interactions" value="1"/>
</dbReference>
<dbReference type="FunCoup" id="Q5ZJY5">
    <property type="interactions" value="3258"/>
</dbReference>
<dbReference type="STRING" id="9031.ENSGALP00000024348"/>
<dbReference type="PaxDb" id="9031-ENSGALP00000024348"/>
<dbReference type="VEuPathDB" id="HostDB:geneid_431608"/>
<dbReference type="eggNOG" id="KOG0979">
    <property type="taxonomic scope" value="Eukaryota"/>
</dbReference>
<dbReference type="InParanoid" id="Q5ZJY5"/>
<dbReference type="OrthoDB" id="10254973at2759"/>
<dbReference type="PhylomeDB" id="Q5ZJY5"/>
<dbReference type="PRO" id="PR:Q5ZJY5"/>
<dbReference type="Proteomes" id="UP000000539">
    <property type="component" value="Unassembled WGS sequence"/>
</dbReference>
<dbReference type="GO" id="GO:0000781">
    <property type="term" value="C:chromosome, telomeric region"/>
    <property type="evidence" value="ECO:0000250"/>
    <property type="project" value="UniProtKB"/>
</dbReference>
<dbReference type="GO" id="GO:0005634">
    <property type="term" value="C:nucleus"/>
    <property type="evidence" value="ECO:0000250"/>
    <property type="project" value="UniProtKB"/>
</dbReference>
<dbReference type="GO" id="GO:0016605">
    <property type="term" value="C:PML body"/>
    <property type="evidence" value="ECO:0000250"/>
    <property type="project" value="UniProtKB"/>
</dbReference>
<dbReference type="GO" id="GO:0030915">
    <property type="term" value="C:Smc5-Smc6 complex"/>
    <property type="evidence" value="ECO:0000250"/>
    <property type="project" value="UniProtKB"/>
</dbReference>
<dbReference type="GO" id="GO:0005524">
    <property type="term" value="F:ATP binding"/>
    <property type="evidence" value="ECO:0007669"/>
    <property type="project" value="UniProtKB-KW"/>
</dbReference>
<dbReference type="GO" id="GO:0003697">
    <property type="term" value="F:single-stranded DNA binding"/>
    <property type="evidence" value="ECO:0000318"/>
    <property type="project" value="GO_Central"/>
</dbReference>
<dbReference type="GO" id="GO:0051301">
    <property type="term" value="P:cell division"/>
    <property type="evidence" value="ECO:0007669"/>
    <property type="project" value="UniProtKB-KW"/>
</dbReference>
<dbReference type="GO" id="GO:0090398">
    <property type="term" value="P:cellular senescence"/>
    <property type="evidence" value="ECO:0000250"/>
    <property type="project" value="UniProtKB"/>
</dbReference>
<dbReference type="GO" id="GO:0000724">
    <property type="term" value="P:double-strand break repair via homologous recombination"/>
    <property type="evidence" value="ECO:0000250"/>
    <property type="project" value="UniProtKB"/>
</dbReference>
<dbReference type="GO" id="GO:0034184">
    <property type="term" value="P:positive regulation of maintenance of mitotic sister chromatid cohesion"/>
    <property type="evidence" value="ECO:0000250"/>
    <property type="project" value="UniProtKB"/>
</dbReference>
<dbReference type="GO" id="GO:0000722">
    <property type="term" value="P:telomere maintenance via recombination"/>
    <property type="evidence" value="ECO:0000250"/>
    <property type="project" value="UniProtKB"/>
</dbReference>
<dbReference type="FunFam" id="3.40.50.300:FF:001301">
    <property type="entry name" value="Structural maintenance of chromosomes 5"/>
    <property type="match status" value="1"/>
</dbReference>
<dbReference type="FunFam" id="3.40.50.300:FF:000793">
    <property type="entry name" value="Structural maintenance of chromosomes protein 5"/>
    <property type="match status" value="1"/>
</dbReference>
<dbReference type="Gene3D" id="3.40.50.300">
    <property type="entry name" value="P-loop containing nucleotide triphosphate hydrolases"/>
    <property type="match status" value="2"/>
</dbReference>
<dbReference type="InterPro" id="IPR027417">
    <property type="entry name" value="P-loop_NTPase"/>
</dbReference>
<dbReference type="InterPro" id="IPR003395">
    <property type="entry name" value="RecF/RecN/SMC_N"/>
</dbReference>
<dbReference type="PANTHER" id="PTHR45916">
    <property type="entry name" value="STRUCTURAL MAINTENANCE OF CHROMOSOMES PROTEIN 5"/>
    <property type="match status" value="1"/>
</dbReference>
<dbReference type="PANTHER" id="PTHR45916:SF1">
    <property type="entry name" value="STRUCTURAL MAINTENANCE OF CHROMOSOMES PROTEIN 5"/>
    <property type="match status" value="1"/>
</dbReference>
<dbReference type="Pfam" id="PF02463">
    <property type="entry name" value="SMC_N"/>
    <property type="match status" value="1"/>
</dbReference>
<dbReference type="SUPFAM" id="SSF52540">
    <property type="entry name" value="P-loop containing nucleoside triphosphate hydrolases"/>
    <property type="match status" value="2"/>
</dbReference>
<accession>Q5ZJY5</accession>
<accession>Q5F3U6</accession>
<keyword id="KW-0067">ATP-binding</keyword>
<keyword id="KW-0131">Cell cycle</keyword>
<keyword id="KW-0132">Cell division</keyword>
<keyword id="KW-0158">Chromosome</keyword>
<keyword id="KW-0175">Coiled coil</keyword>
<keyword id="KW-0227">DNA damage</keyword>
<keyword id="KW-0233">DNA recombination</keyword>
<keyword id="KW-0234">DNA repair</keyword>
<keyword id="KW-0498">Mitosis</keyword>
<keyword id="KW-0547">Nucleotide-binding</keyword>
<keyword id="KW-0539">Nucleus</keyword>
<keyword id="KW-1185">Reference proteome</keyword>
<keyword id="KW-0779">Telomere</keyword>
<name>SMC5_CHICK</name>
<sequence>MAVQTRLRAEGSQLRLCDTHHAGKPRSVEGSIVRIYMENFLTYDICEVRPGPNLNMIIGANGTGKSSIVCAICLGLAGKPSFLGRAEKVGLFVKQGCLKGLVEIELFKVPENIIITREIQVVTNTSTWHINRKLTTLKTVEEQVAALNIQVDNLCQFLPQDKVGEFARMSKIELLEATEKSIGPPEMYQFHCKLKSLKEKERELENVCKDKVNSLEKMKQRAERYKQDVDRYHECKRHLDLIDMLQRKRPWVEYETVRQQHEDVKQRRDQAKEELKNLKEMQSPLTKKIRECEEFYNSLNMKIKNTADEIKGVSQKCKEKQDALEMKDKQISEINQALRMKKDEEVDRKKKILSAYKMIDEWNNELNTVTDCENLQPQIDAVNNELKHVQEERANIDSDIGDVTTEKINQERENGRIIDRIGQLNNIIKVKEETLQARFRDTHSALMWLRKNKHKFKKEVCEPMMLTINVKDNKHAKYVENHISTNDMKAFVFESQEDMELFLVELRDRQKLRVNAVCAPDKSCAETLPSTPIEELHRYGFFSYLRELFDAPLPVMSYLCSQYHVHEVPVGTEKTRNMIERVIKETKLKQIYTAEEKYTIKVSTYTKLSFSTNMCLRPAQFLNYYVDTDERRQLENQQQNIKHILQSLDKQLMTLCERQKHLECRDNELRQQKKELLERGSRRKQLESKIAVKYDSIRQLEQNPINLEKESQQAKVKIRAINIQKAKLVTELMCHIKNYVSLNICKADLILQSTAVDAEKNRLEAEYKAASVELRASEQRFLELDERKRILTENCKELLKKARQMCNMNLDQHLPKEFQTAFQTLPDTLEEIDAFLNEERSRVSCFTGLSASVVEECSKQMEEIQKLMESIEENKKELDDYKQSISKIKERWLNPLKKMIESINEKFSGFFSSMESVGEVDLHVENEEEYDKYGIRIRVKFHNFTDLHELTPYHQSGGEKSVSTVLYLMALQELNRCPFRVVDEINQGMDPVNERRVFEMFVKTACKESTSQYFLITPKLLQNLTYNEKMTLLFVYNGPFMLEANKWNLKSFCRRRRRLGRMDEQ</sequence>
<gene>
    <name type="primary">SMC5</name>
    <name type="synonym">SMC5L1</name>
    <name type="ORF">RCJMB04_14g12</name>
    <name type="ORF">RCJMB04_6o14</name>
</gene>
<comment type="function">
    <text evidence="1">Core component of the SMC5-SMC6 complex, a complex involved in repair of DNA double-strand breaks by homologous recombination. The complex may promote sister chromatid homologous recombination by recruiting the SMC1-SMC3 cohesin complex to double-strand breaks. The complex is required for telomere maintenance via recombination and mediates sumoylation of shelterin complex (telosome) components. Required for recruitment of telomeres to PML nuclear bodies. Required for sister chromatid cohesion during prometaphase and mitotic progression; the function seems to be independent of SMC6 (By similarity).</text>
</comment>
<comment type="subunit">
    <text evidence="1">Forms a heterodimer with SMC6. Component of the SMC5-SMC6 complex which consists at least of SMC5, SMC6, NSMCE2, NSMCE1 and NSMCE4A (By similarity).</text>
</comment>
<comment type="subcellular location">
    <subcellularLocation>
        <location evidence="1">Nucleus</location>
    </subcellularLocation>
    <subcellularLocation>
        <location evidence="1">Chromosome</location>
    </subcellularLocation>
    <subcellularLocation>
        <location evidence="1">Chromosome</location>
        <location evidence="1">Telomere</location>
    </subcellularLocation>
    <text evidence="1">Associates with chromatin.</text>
</comment>
<comment type="domain">
    <text evidence="1">The flexible hinge domain, which separates the large intramolecular coiled coil regions, allows the heterotypic interaction with the corresponding domain of SMC6, forming a V-shaped heterodimer.</text>
</comment>
<comment type="similarity">
    <text evidence="3">Belongs to the SMC family. SMC5 subfamily.</text>
</comment>
<protein>
    <recommendedName>
        <fullName>Structural maintenance of chromosomes protein 5</fullName>
        <shortName>SMC protein 5</shortName>
        <shortName>SMC-5</shortName>
    </recommendedName>
</protein>
<feature type="chain" id="PRO_0000270953" description="Structural maintenance of chromosomes protein 5">
    <location>
        <begin position="1"/>
        <end position="1065"/>
    </location>
</feature>
<feature type="region of interest" description="Flexible hinge">
    <location>
        <begin position="441"/>
        <end position="627"/>
    </location>
</feature>
<feature type="coiled-coil region" evidence="2">
    <location>
        <begin position="134"/>
        <end position="156"/>
    </location>
</feature>
<feature type="coiled-coil region" evidence="2">
    <location>
        <begin position="186"/>
        <end position="400"/>
    </location>
</feature>
<feature type="coiled-coil region" evidence="2">
    <location>
        <begin position="628"/>
        <end position="805"/>
    </location>
</feature>
<feature type="binding site" evidence="2">
    <location>
        <begin position="59"/>
        <end position="66"/>
    </location>
    <ligand>
        <name>ATP</name>
        <dbReference type="ChEBI" id="CHEBI:30616"/>
    </ligand>
</feature>
<feature type="sequence conflict" description="In Ref. 1; CAH65188." evidence="3" ref="1">
    <original>S</original>
    <variation>F</variation>
    <location>
        <position position="27"/>
    </location>
</feature>
<feature type="sequence conflict" description="In Ref. 1; CAH65188." evidence="3" ref="1">
    <original>T</original>
    <variation>A</variation>
    <location>
        <position position="135"/>
    </location>
</feature>
<feature type="sequence conflict" description="In Ref. 1; CAH65188." evidence="3" ref="1">
    <original>TTEKI</original>
    <variation>HREN</variation>
    <location>
        <begin position="404"/>
        <end position="408"/>
    </location>
</feature>
<reference key="1">
    <citation type="journal article" date="2005" name="Genome Biol.">
        <title>Full-length cDNAs from chicken bursal lymphocytes to facilitate gene function analysis.</title>
        <authorList>
            <person name="Caldwell R.B."/>
            <person name="Kierzek A.M."/>
            <person name="Arakawa H."/>
            <person name="Bezzubov Y."/>
            <person name="Zaim J."/>
            <person name="Fiedler P."/>
            <person name="Kutter S."/>
            <person name="Blagodatski A."/>
            <person name="Kostovska D."/>
            <person name="Koter M."/>
            <person name="Plachy J."/>
            <person name="Carninci P."/>
            <person name="Hayashizaki Y."/>
            <person name="Buerstedde J.-M."/>
        </authorList>
    </citation>
    <scope>NUCLEOTIDE SEQUENCE [LARGE SCALE MRNA]</scope>
    <source>
        <strain>CB</strain>
        <tissue>Bursa of Fabricius</tissue>
    </source>
</reference>